<keyword id="KW-0010">Activator</keyword>
<keyword id="KW-0539">Nucleus</keyword>
<keyword id="KW-1185">Reference proteome</keyword>
<keyword id="KW-0804">Transcription</keyword>
<keyword id="KW-0805">Transcription regulation</keyword>
<evidence type="ECO:0000250" key="1"/>
<evidence type="ECO:0000305" key="2"/>
<accession>Q75CZ2</accession>
<name>MED14_EREGS</name>
<sequence length="967" mass="110811">MTIAVKESKILYGNFDKAKSGIMKGSGGIVEQGPGLQQRIITPAKEMPPEIPHVEFNQLPLSVLIRNLTVYAAKELSQYMKTNVRSTQDASTRKMEFLRLIIFLRNQFLRLYVLVKWCKTIRQNNFHTMIDLLNWFRGTNIIVNNCLLALKDMSTSMAGAKLPNPDLITALEVLMLGRPDLPTHGFLLTGDENGQQANKIPAKLILKRFRDLNTCLSVKISLMDLPAEMHTYSIKDGRITFTVFPEFEISLSTIDRESPLFFVDVKFLFNENKFPLNTTKIALLVNDILYKSPTPLLSLYQFLHRYVLTLQLYMIHVELQDIETNGKYSGGNLAHHYDPKKNIISLRYWLQSKMNSKCKALIGVEKTSQSIILQWHLPDTKEEGKTTKYNNLLGNIEAILDEITFNHARIIMSELLDTGLFEGDDNKNDTSDTLFFHVPVICVATAPVQLKINTISGIFYFKNPSALLLSYAKQLNQTSDLDDVVNILERLRMDKIVHILRNMFEKTGWICEDVVKLNKPILYDKHKDKKRILTRDLFIRIKDWPANWFFILNLVASGATCIVEKLIGKVQSVKGTWEVKYLDQGNLQVSKLESITYQNVMHMQKTIIQKILNHMIIDSLNELKISKVICQGEASQKLPAYVQTNTAGASNVSIIAIGLESFLQGSKALSDTLESTIFLKMDYEQNEVKLFGKFKKDTQMIRYQCDDLLINFIDKRGLAFHMTEDFTSLNHVVQYLTKFRQKLMQLVVLTDVTEKLHNNFRSEHFQIVKLRPNEISFRYLKNSKDDQDCTIQIVTNETKIEKLQVQLSPLNPQNIIQKYLECDKYDPHFIFNYLHFTSKLFSAVKSIESITNTNTMTITLHLHTLAAYQLSYHDRLTGGQIALCIDLRNSPSRAGSMYHLYFAQEDYSASKNPMYPAILQVINNVFMLNNNTKRKVPSVIRLGTGVACPLGDIEPLLEEIHSILIRS</sequence>
<feature type="chain" id="PRO_0000304591" description="Mediator of RNA polymerase II transcription subunit 14">
    <location>
        <begin position="1"/>
        <end position="967"/>
    </location>
</feature>
<organism>
    <name type="scientific">Eremothecium gossypii (strain ATCC 10895 / CBS 109.51 / FGSC 9923 / NRRL Y-1056)</name>
    <name type="common">Yeast</name>
    <name type="synonym">Ashbya gossypii</name>
    <dbReference type="NCBI Taxonomy" id="284811"/>
    <lineage>
        <taxon>Eukaryota</taxon>
        <taxon>Fungi</taxon>
        <taxon>Dikarya</taxon>
        <taxon>Ascomycota</taxon>
        <taxon>Saccharomycotina</taxon>
        <taxon>Saccharomycetes</taxon>
        <taxon>Saccharomycetales</taxon>
        <taxon>Saccharomycetaceae</taxon>
        <taxon>Eremothecium</taxon>
    </lineage>
</organism>
<proteinExistence type="inferred from homology"/>
<reference key="1">
    <citation type="journal article" date="2004" name="Science">
        <title>The Ashbya gossypii genome as a tool for mapping the ancient Saccharomyces cerevisiae genome.</title>
        <authorList>
            <person name="Dietrich F.S."/>
            <person name="Voegeli S."/>
            <person name="Brachat S."/>
            <person name="Lerch A."/>
            <person name="Gates K."/>
            <person name="Steiner S."/>
            <person name="Mohr C."/>
            <person name="Poehlmann R."/>
            <person name="Luedi P."/>
            <person name="Choi S."/>
            <person name="Wing R.A."/>
            <person name="Flavier A."/>
            <person name="Gaffney T.D."/>
            <person name="Philippsen P."/>
        </authorList>
    </citation>
    <scope>NUCLEOTIDE SEQUENCE [LARGE SCALE GENOMIC DNA]</scope>
    <source>
        <strain>ATCC 10895 / CBS 109.51 / FGSC 9923 / NRRL Y-1056</strain>
    </source>
</reference>
<reference key="2">
    <citation type="journal article" date="2013" name="G3 (Bethesda)">
        <title>Genomes of Ashbya fungi isolated from insects reveal four mating-type loci, numerous translocations, lack of transposons, and distinct gene duplications.</title>
        <authorList>
            <person name="Dietrich F.S."/>
            <person name="Voegeli S."/>
            <person name="Kuo S."/>
            <person name="Philippsen P."/>
        </authorList>
    </citation>
    <scope>GENOME REANNOTATION</scope>
    <scope>SEQUENCE REVISION TO 340</scope>
    <source>
        <strain>ATCC 10895 / CBS 109.51 / FGSC 9923 / NRRL Y-1056</strain>
    </source>
</reference>
<comment type="function">
    <text evidence="1">Component of the Mediator complex, a coactivator involved in the regulated transcription of nearly all RNA polymerase II-dependent genes. Mediator functions as a bridge to convey information from gene-specific regulatory proteins to the basal RNA polymerase II transcription machinery. Mediator is recruited to promoters by direct interactions with regulatory proteins and serves as a scaffold for the assembly of a functional preinitiation complex with RNA polymerase II and the general transcription factors (By similarity).</text>
</comment>
<comment type="subunit">
    <text evidence="1">Component of the Mediator complex.</text>
</comment>
<comment type="subcellular location">
    <subcellularLocation>
        <location evidence="2">Nucleus</location>
    </subcellularLocation>
</comment>
<comment type="similarity">
    <text evidence="2">Belongs to the Mediator complex subunit 14 family.</text>
</comment>
<protein>
    <recommendedName>
        <fullName>Mediator of RNA polymerase II transcription subunit 14</fullName>
    </recommendedName>
    <alternativeName>
        <fullName>Mediator complex subunit 14</fullName>
    </alternativeName>
</protein>
<dbReference type="EMBL" id="AE016815">
    <property type="protein sequence ID" value="AAS51003.2"/>
    <property type="molecule type" value="Genomic_DNA"/>
</dbReference>
<dbReference type="RefSeq" id="NP_983179.2">
    <property type="nucleotide sequence ID" value="NM_208532.2"/>
</dbReference>
<dbReference type="SMR" id="Q75CZ2"/>
<dbReference type="FunCoup" id="Q75CZ2">
    <property type="interactions" value="299"/>
</dbReference>
<dbReference type="STRING" id="284811.Q75CZ2"/>
<dbReference type="EnsemblFungi" id="AAS51003">
    <property type="protein sequence ID" value="AAS51003"/>
    <property type="gene ID" value="AGOS_ABR230C"/>
</dbReference>
<dbReference type="GeneID" id="4619289"/>
<dbReference type="KEGG" id="ago:AGOS_ABR230C"/>
<dbReference type="eggNOG" id="KOG1875">
    <property type="taxonomic scope" value="Eukaryota"/>
</dbReference>
<dbReference type="HOGENOM" id="CLU_286680_0_0_1"/>
<dbReference type="InParanoid" id="Q75CZ2"/>
<dbReference type="OMA" id="MIDLLNW"/>
<dbReference type="OrthoDB" id="205099at2759"/>
<dbReference type="Proteomes" id="UP000000591">
    <property type="component" value="Chromosome II"/>
</dbReference>
<dbReference type="GO" id="GO:0070847">
    <property type="term" value="C:core mediator complex"/>
    <property type="evidence" value="ECO:0000318"/>
    <property type="project" value="GO_Central"/>
</dbReference>
<dbReference type="GO" id="GO:0016592">
    <property type="term" value="C:mediator complex"/>
    <property type="evidence" value="ECO:0000318"/>
    <property type="project" value="GO_Central"/>
</dbReference>
<dbReference type="GO" id="GO:0061629">
    <property type="term" value="F:RNA polymerase II-specific DNA-binding transcription factor binding"/>
    <property type="evidence" value="ECO:0007669"/>
    <property type="project" value="EnsemblFungi"/>
</dbReference>
<dbReference type="GO" id="GO:0001093">
    <property type="term" value="F:TFIIB-class transcription factor binding"/>
    <property type="evidence" value="ECO:0007669"/>
    <property type="project" value="EnsemblFungi"/>
</dbReference>
<dbReference type="GO" id="GO:0003712">
    <property type="term" value="F:transcription coregulator activity"/>
    <property type="evidence" value="ECO:0000318"/>
    <property type="project" value="GO_Central"/>
</dbReference>
<dbReference type="GO" id="GO:0000122">
    <property type="term" value="P:negative regulation of transcription by RNA polymerase II"/>
    <property type="evidence" value="ECO:0007669"/>
    <property type="project" value="EnsemblFungi"/>
</dbReference>
<dbReference type="GO" id="GO:0032968">
    <property type="term" value="P:positive regulation of transcription elongation by RNA polymerase II"/>
    <property type="evidence" value="ECO:0007669"/>
    <property type="project" value="EnsemblFungi"/>
</dbReference>
<dbReference type="GO" id="GO:0060261">
    <property type="term" value="P:positive regulation of transcription initiation by RNA polymerase II"/>
    <property type="evidence" value="ECO:0007669"/>
    <property type="project" value="EnsemblFungi"/>
</dbReference>
<dbReference type="GO" id="GO:0006357">
    <property type="term" value="P:regulation of transcription by RNA polymerase II"/>
    <property type="evidence" value="ECO:0000318"/>
    <property type="project" value="GO_Central"/>
</dbReference>
<dbReference type="GO" id="GO:0051123">
    <property type="term" value="P:RNA polymerase II preinitiation complex assembly"/>
    <property type="evidence" value="ECO:0007669"/>
    <property type="project" value="EnsemblFungi"/>
</dbReference>
<dbReference type="InterPro" id="IPR055122">
    <property type="entry name" value="Med14_N"/>
</dbReference>
<dbReference type="InterPro" id="IPR013947">
    <property type="entry name" value="Mediator_Med14"/>
</dbReference>
<dbReference type="PANTHER" id="PTHR12809">
    <property type="entry name" value="MEDIATOR COMPLEX SUBUNIT"/>
    <property type="match status" value="1"/>
</dbReference>
<dbReference type="PANTHER" id="PTHR12809:SF2">
    <property type="entry name" value="MEDIATOR OF RNA POLYMERASE II TRANSCRIPTION SUBUNIT 14"/>
    <property type="match status" value="1"/>
</dbReference>
<dbReference type="Pfam" id="PF08638">
    <property type="entry name" value="Med14"/>
    <property type="match status" value="1"/>
</dbReference>
<gene>
    <name type="primary">RGR1</name>
    <name type="synonym">MED14</name>
    <name type="ordered locus">ABR230C</name>
</gene>